<proteinExistence type="inferred from homology"/>
<feature type="chain" id="PRO_0000166463" description="Galactosyl transferase CpsE">
    <location>
        <begin position="1"/>
        <end position="449"/>
    </location>
</feature>
<feature type="transmembrane region" description="Helical" evidence="1">
    <location>
        <begin position="5"/>
        <end position="22"/>
    </location>
</feature>
<feature type="transmembrane region" description="Helical" evidence="1">
    <location>
        <begin position="27"/>
        <end position="46"/>
    </location>
</feature>
<feature type="transmembrane region" description="Helical" evidence="1">
    <location>
        <begin position="59"/>
        <end position="78"/>
    </location>
</feature>
<feature type="transmembrane region" description="Helical" evidence="1">
    <location>
        <begin position="88"/>
        <end position="107"/>
    </location>
</feature>
<feature type="transmembrane region" description="Helical" evidence="1">
    <location>
        <begin position="258"/>
        <end position="280"/>
    </location>
</feature>
<feature type="sequence variant" description="In strain: SG96/585 / Serotype III.">
    <original>T</original>
    <variation>M</variation>
    <location>
        <position position="262"/>
    </location>
</feature>
<feature type="sequence variant" description="In strain: COH1 / Serotype III.">
    <original>V</original>
    <variation>A</variation>
    <location>
        <position position="370"/>
    </location>
</feature>
<protein>
    <recommendedName>
        <fullName>Galactosyl transferase CpsE</fullName>
        <ecNumber>2.7.8.-</ecNumber>
    </recommendedName>
</protein>
<reference key="1">
    <citation type="journal article" date="1993" name="Mol. Microbiol.">
        <title>Identification of cpsD, a gene essential for type III capsule expression in group B streptococci.</title>
        <authorList>
            <person name="Rubens C.E."/>
            <person name="Heggen L.M."/>
            <person name="Haft R.F."/>
            <person name="Wessels M.R."/>
        </authorList>
    </citation>
    <scope>NUCLEOTIDE SEQUENCE [GENOMIC DNA]</scope>
    <source>
        <strain>COH1 / Serotype III</strain>
    </source>
</reference>
<reference key="2">
    <citation type="journal article" date="2000" name="J. Bacteriol.">
        <title>The serotype of type Ia and III group B streptococci is determined by the polymerase gene within the polycistronic capsule operon.</title>
        <authorList>
            <person name="Chaffin D.O."/>
            <person name="Beres S.B."/>
            <person name="Yim H.H."/>
            <person name="Rubens C.E."/>
        </authorList>
    </citation>
    <scope>NUCLEOTIDE SEQUENCE [GENOMIC DNA]</scope>
    <scope>SEQUENCE REVISION</scope>
    <source>
        <strain>COH1 / Serotype III</strain>
    </source>
</reference>
<reference key="3">
    <citation type="journal article" date="2002" name="J. Clin. Microbiol.">
        <title>Serotype identification of Group B Streptococci by PCR and sequencing.</title>
        <authorList>
            <person name="Kong F."/>
            <person name="Gowan S."/>
            <person name="Martin D."/>
            <person name="James G."/>
            <person name="Gilbert G.L."/>
        </authorList>
    </citation>
    <scope>NUCLEOTIDE SEQUENCE [GENOMIC DNA]</scope>
    <source>
        <strain>4-61 / Serotype III</strain>
        <strain>4-62 / Serotype III</strain>
        <strain>GB00/009 / Serotype III</strain>
        <strain>GB00/031 / Serotype III</strain>
        <strain>M781 / Serotype III</strain>
        <strain>NCDC SS620 / Serotype III</strain>
        <strain>SG94/1041 / Serotype III</strain>
        <strain>SG95/545 / Serotype III</strain>
        <strain>SG96/039 / Serotype III</strain>
        <strain>SG96/585 / Serotype III</strain>
        <strain>SG97/122 / Serotype III</strain>
        <strain>SG98/192 / Serotype III</strain>
        <strain>SG98/367 / Serotype III</strain>
        <strain>SG99/056 / Serotype III</strain>
        <strain>SG99/143 / Serotype III</strain>
    </source>
</reference>
<reference key="4">
    <citation type="journal article" date="2002" name="Mol. Microbiol.">
        <title>Genome sequence of Streptococcus agalactiae, a pathogen causing invasive neonatal disease.</title>
        <authorList>
            <person name="Glaser P."/>
            <person name="Rusniok C."/>
            <person name="Buchrieser C."/>
            <person name="Chevalier F."/>
            <person name="Frangeul L."/>
            <person name="Msadek T."/>
            <person name="Zouine M."/>
            <person name="Couve E."/>
            <person name="Lalioui L."/>
            <person name="Poyart C."/>
            <person name="Trieu-Cuot P."/>
            <person name="Kunst F."/>
        </authorList>
    </citation>
    <scope>NUCLEOTIDE SEQUENCE [LARGE SCALE GENOMIC DNA]</scope>
    <source>
        <strain>NEM316</strain>
    </source>
</reference>
<organism>
    <name type="scientific">Streptococcus agalactiae serotype III (strain NEM316)</name>
    <dbReference type="NCBI Taxonomy" id="211110"/>
    <lineage>
        <taxon>Bacteria</taxon>
        <taxon>Bacillati</taxon>
        <taxon>Bacillota</taxon>
        <taxon>Bacilli</taxon>
        <taxon>Lactobacillales</taxon>
        <taxon>Streptococcaceae</taxon>
        <taxon>Streptococcus</taxon>
    </lineage>
</organism>
<evidence type="ECO:0000255" key="1"/>
<evidence type="ECO:0000305" key="2"/>
<evidence type="ECO:0000305" key="3">
    <source>
    </source>
</evidence>
<keyword id="KW-0972">Capsule biogenesis/degradation</keyword>
<keyword id="KW-1003">Cell membrane</keyword>
<keyword id="KW-0270">Exopolysaccharide synthesis</keyword>
<keyword id="KW-0472">Membrane</keyword>
<keyword id="KW-0808">Transferase</keyword>
<keyword id="KW-0812">Transmembrane</keyword>
<keyword id="KW-1133">Transmembrane helix</keyword>
<keyword id="KW-0843">Virulence</keyword>
<dbReference type="EC" id="2.7.8.-"/>
<dbReference type="EMBL" id="AF163833">
    <property type="protein sequence ID" value="AAD53066.1"/>
    <property type="molecule type" value="Genomic_DNA"/>
</dbReference>
<dbReference type="EMBL" id="AF332896">
    <property type="protein sequence ID" value="AAL57072.1"/>
    <property type="molecule type" value="Genomic_DNA"/>
</dbReference>
<dbReference type="EMBL" id="AF332897">
    <property type="protein sequence ID" value="AAL57079.1"/>
    <property type="molecule type" value="Genomic_DNA"/>
</dbReference>
<dbReference type="EMBL" id="AF332898">
    <property type="protein sequence ID" value="AAL57085.1"/>
    <property type="molecule type" value="Genomic_DNA"/>
</dbReference>
<dbReference type="EMBL" id="AF332899">
    <property type="protein sequence ID" value="AAL57091.1"/>
    <property type="molecule type" value="Genomic_DNA"/>
</dbReference>
<dbReference type="EMBL" id="AF332900">
    <property type="protein sequence ID" value="AAL57097.1"/>
    <property type="molecule type" value="Genomic_DNA"/>
</dbReference>
<dbReference type="EMBL" id="AF363032">
    <property type="protein sequence ID" value="AAL56269.1"/>
    <property type="molecule type" value="Genomic_DNA"/>
</dbReference>
<dbReference type="EMBL" id="AF363033">
    <property type="protein sequence ID" value="AAL56273.1"/>
    <property type="molecule type" value="Genomic_DNA"/>
</dbReference>
<dbReference type="EMBL" id="AF363034">
    <property type="protein sequence ID" value="AAL56277.1"/>
    <property type="molecule type" value="Genomic_DNA"/>
</dbReference>
<dbReference type="EMBL" id="AF363035">
    <property type="protein sequence ID" value="AAL56281.1"/>
    <property type="molecule type" value="Genomic_DNA"/>
</dbReference>
<dbReference type="EMBL" id="AF363039">
    <property type="protein sequence ID" value="AAL56297.1"/>
    <property type="molecule type" value="Genomic_DNA"/>
</dbReference>
<dbReference type="EMBL" id="AF363040">
    <property type="protein sequence ID" value="AAL56301.1"/>
    <property type="molecule type" value="Genomic_DNA"/>
</dbReference>
<dbReference type="EMBL" id="AF363055">
    <property type="protein sequence ID" value="AAL56361.1"/>
    <property type="molecule type" value="Genomic_DNA"/>
</dbReference>
<dbReference type="EMBL" id="AF363056">
    <property type="protein sequence ID" value="AAL56368.1"/>
    <property type="molecule type" value="Genomic_DNA"/>
</dbReference>
<dbReference type="EMBL" id="AF381031">
    <property type="protein sequence ID" value="AAL57286.1"/>
    <property type="molecule type" value="Genomic_DNA"/>
</dbReference>
<dbReference type="EMBL" id="AF367973">
    <property type="protein sequence ID" value="AAL56403.1"/>
    <property type="molecule type" value="Genomic_DNA"/>
</dbReference>
<dbReference type="EMBL" id="AL766849">
    <property type="protein sequence ID" value="CAD46903.1"/>
    <property type="status" value="ALT_INIT"/>
    <property type="molecule type" value="Genomic_DNA"/>
</dbReference>
<dbReference type="PIR" id="T44643">
    <property type="entry name" value="T44643"/>
</dbReference>
<dbReference type="SMR" id="Q04664"/>
<dbReference type="KEGG" id="san:cpsE"/>
<dbReference type="eggNOG" id="COG2148">
    <property type="taxonomic scope" value="Bacteria"/>
</dbReference>
<dbReference type="HOGENOM" id="CLU_024920_3_4_9"/>
<dbReference type="Proteomes" id="UP000000823">
    <property type="component" value="Chromosome"/>
</dbReference>
<dbReference type="GO" id="GO:0005886">
    <property type="term" value="C:plasma membrane"/>
    <property type="evidence" value="ECO:0007669"/>
    <property type="project" value="UniProtKB-SubCell"/>
</dbReference>
<dbReference type="GO" id="GO:0016780">
    <property type="term" value="F:phosphotransferase activity, for other substituted phosphate groups"/>
    <property type="evidence" value="ECO:0007669"/>
    <property type="project" value="TreeGrafter"/>
</dbReference>
<dbReference type="GO" id="GO:0000271">
    <property type="term" value="P:polysaccharide biosynthetic process"/>
    <property type="evidence" value="ECO:0007669"/>
    <property type="project" value="UniProtKB-KW"/>
</dbReference>
<dbReference type="InterPro" id="IPR003362">
    <property type="entry name" value="Bact_transf"/>
</dbReference>
<dbReference type="InterPro" id="IPR017475">
    <property type="entry name" value="EPS_sugar_tfrase"/>
</dbReference>
<dbReference type="NCBIfam" id="TIGR03025">
    <property type="entry name" value="EPS_sugtrans"/>
    <property type="match status" value="1"/>
</dbReference>
<dbReference type="PANTHER" id="PTHR30576">
    <property type="entry name" value="COLANIC BIOSYNTHESIS UDP-GLUCOSE LIPID CARRIER TRANSFERASE"/>
    <property type="match status" value="1"/>
</dbReference>
<dbReference type="PANTHER" id="PTHR30576:SF10">
    <property type="entry name" value="SLL5057 PROTEIN"/>
    <property type="match status" value="1"/>
</dbReference>
<dbReference type="Pfam" id="PF02397">
    <property type="entry name" value="Bac_transf"/>
    <property type="match status" value="1"/>
</dbReference>
<sequence length="449" mass="52378">MIQTVVVYFSASLTLTLITPNFKSNKDLLFVLLIHYIVFYLSDFYRDFWSRGYLEEFKMVLKYSFYYIFISSSLFFIFKNSFTTTRLSFFTFIAMNSILLYLLNSFLKYYRKYSYAKFSRDTKVVLITNKDSLSKMTFRNKYDHNYIAVCILDSSEKDCYDLKHNSLRIINKDALTSELTCLTVDQAFINIPIELFGKYQIQDIINDIEAMGVIVNVNVEALSFDNIGEKRIQTFEGYSVITYSMKFYKYSHLIAKRFLDITGAIIGLLICGIVAIFLVPQIRKDGGPAIFSQNRVGRNGRIFRFYKFRSMRVDAEQIKKDLLVHNQMTGLMFKLEDDPRITKIGKFIRKTSIDELPQFYNVLKGDMSLVGTRPPTVDEYEKYNSTQKRRLSFKPGITGLWQISGRNNITDFDEIVKLDVQYINEWSIWSDIKIILLTLKVVLLGTGAK</sequence>
<accession>Q04664</accession>
<accession>Q8VL98</accession>
<accession>Q8VSS5</accession>
<accession>Q9JN35</accession>
<gene>
    <name type="primary">cpsE</name>
    <name type="ordered locus">gbs1244</name>
</gene>
<name>CPSE_STRA3</name>
<comment type="function">
    <text>Galactosyl transferase is essential for the assembly of the group B streptococci (GBS) type III capsular polysaccharide. May be involved in the formation of either or both galactosidic bonds by catalyzing the addition of galactose to an oligosaccharide precursor or to a lipid intermediate. Type III capsular polysaccharide consists of a linear backbone with short side chains ending in residues of N-acetylneuraminic acid or sialic acid. The presence of sialic acid on the surface of the organism inhibits activation of the alternative pathway of complement and is thought to be an important element in the virulence function of the capsule.</text>
</comment>
<comment type="subcellular location">
    <subcellularLocation>
        <location>Cell membrane</location>
        <topology>Multi-pass membrane protein</topology>
    </subcellularLocation>
</comment>
<comment type="similarity">
    <text evidence="2">Belongs to the bacterial sugar transferase family.</text>
</comment>
<comment type="caution">
    <text evidence="3">Was originally called CpsD.</text>
</comment>
<comment type="sequence caution" evidence="2">
    <conflict type="erroneous initiation">
        <sequence resource="EMBL-CDS" id="CAD46903"/>
    </conflict>
</comment>